<feature type="chain" id="PRO_1000051590" description="Glucose-1-phosphate adenylyltransferase">
    <location>
        <begin position="1"/>
        <end position="431"/>
    </location>
</feature>
<feature type="binding site" evidence="1">
    <location>
        <position position="163"/>
    </location>
    <ligand>
        <name>alpha-D-glucose 1-phosphate</name>
        <dbReference type="ChEBI" id="CHEBI:58601"/>
    </ligand>
</feature>
<feature type="binding site" evidence="1">
    <location>
        <begin position="178"/>
        <end position="179"/>
    </location>
    <ligand>
        <name>alpha-D-glucose 1-phosphate</name>
        <dbReference type="ChEBI" id="CHEBI:58601"/>
    </ligand>
</feature>
<feature type="binding site" evidence="1">
    <location>
        <position position="210"/>
    </location>
    <ligand>
        <name>alpha-D-glucose 1-phosphate</name>
        <dbReference type="ChEBI" id="CHEBI:58601"/>
    </ligand>
</feature>
<reference key="1">
    <citation type="submission" date="2006-05" db="EMBL/GenBank/DDBJ databases">
        <authorList>
            <consortium name="Genoscope"/>
        </authorList>
    </citation>
    <scope>NUCLEOTIDE SEQUENCE [LARGE SCALE GENOMIC DNA]</scope>
    <source>
        <strain>WH7803</strain>
    </source>
</reference>
<name>GLGC_SYNPW</name>
<gene>
    <name evidence="1" type="primary">glgC</name>
    <name type="ordered locus">SynWH7803_1298</name>
</gene>
<protein>
    <recommendedName>
        <fullName evidence="1">Glucose-1-phosphate adenylyltransferase</fullName>
        <ecNumber evidence="1">2.7.7.27</ecNumber>
    </recommendedName>
    <alternativeName>
        <fullName evidence="1">ADP-glucose pyrophosphorylase</fullName>
        <shortName evidence="1">ADPGlc PPase</shortName>
    </alternativeName>
    <alternativeName>
        <fullName evidence="1">ADP-glucose synthase</fullName>
    </alternativeName>
</protein>
<dbReference type="EC" id="2.7.7.27" evidence="1"/>
<dbReference type="EMBL" id="CT971583">
    <property type="protein sequence ID" value="CAK23724.1"/>
    <property type="molecule type" value="Genomic_DNA"/>
</dbReference>
<dbReference type="SMR" id="A5GLA9"/>
<dbReference type="STRING" id="32051.SynWH7803_1298"/>
<dbReference type="KEGG" id="syx:SynWH7803_1298"/>
<dbReference type="eggNOG" id="COG0448">
    <property type="taxonomic scope" value="Bacteria"/>
</dbReference>
<dbReference type="HOGENOM" id="CLU_029499_14_4_3"/>
<dbReference type="OrthoDB" id="9801810at2"/>
<dbReference type="UniPathway" id="UPA00164"/>
<dbReference type="Proteomes" id="UP000001566">
    <property type="component" value="Chromosome"/>
</dbReference>
<dbReference type="GO" id="GO:0031470">
    <property type="term" value="C:carboxysome"/>
    <property type="evidence" value="ECO:0007669"/>
    <property type="project" value="UniProtKB-ARBA"/>
</dbReference>
<dbReference type="GO" id="GO:0005524">
    <property type="term" value="F:ATP binding"/>
    <property type="evidence" value="ECO:0007669"/>
    <property type="project" value="UniProtKB-KW"/>
</dbReference>
<dbReference type="GO" id="GO:0008878">
    <property type="term" value="F:glucose-1-phosphate adenylyltransferase activity"/>
    <property type="evidence" value="ECO:0007669"/>
    <property type="project" value="UniProtKB-UniRule"/>
</dbReference>
<dbReference type="GO" id="GO:0043886">
    <property type="term" value="F:structural constituent of carboxysome shell"/>
    <property type="evidence" value="ECO:0007669"/>
    <property type="project" value="UniProtKB-ARBA"/>
</dbReference>
<dbReference type="GO" id="GO:0005978">
    <property type="term" value="P:glycogen biosynthetic process"/>
    <property type="evidence" value="ECO:0007669"/>
    <property type="project" value="UniProtKB-UniRule"/>
</dbReference>
<dbReference type="CDD" id="cd02508">
    <property type="entry name" value="ADP_Glucose_PP"/>
    <property type="match status" value="1"/>
</dbReference>
<dbReference type="CDD" id="cd04651">
    <property type="entry name" value="LbH_G1P_AT_C"/>
    <property type="match status" value="1"/>
</dbReference>
<dbReference type="Gene3D" id="2.160.10.10">
    <property type="entry name" value="Hexapeptide repeat proteins"/>
    <property type="match status" value="1"/>
</dbReference>
<dbReference type="Gene3D" id="3.90.550.10">
    <property type="entry name" value="Spore Coat Polysaccharide Biosynthesis Protein SpsA, Chain A"/>
    <property type="match status" value="1"/>
</dbReference>
<dbReference type="HAMAP" id="MF_00624">
    <property type="entry name" value="GlgC"/>
    <property type="match status" value="1"/>
</dbReference>
<dbReference type="InterPro" id="IPR011831">
    <property type="entry name" value="ADP-Glc_PPase"/>
</dbReference>
<dbReference type="InterPro" id="IPR005836">
    <property type="entry name" value="ADP_Glu_pyroP_CS"/>
</dbReference>
<dbReference type="InterPro" id="IPR023049">
    <property type="entry name" value="GlgC_bac"/>
</dbReference>
<dbReference type="InterPro" id="IPR005835">
    <property type="entry name" value="NTP_transferase_dom"/>
</dbReference>
<dbReference type="InterPro" id="IPR029044">
    <property type="entry name" value="Nucleotide-diphossugar_trans"/>
</dbReference>
<dbReference type="InterPro" id="IPR011004">
    <property type="entry name" value="Trimer_LpxA-like_sf"/>
</dbReference>
<dbReference type="NCBIfam" id="TIGR02091">
    <property type="entry name" value="glgC"/>
    <property type="match status" value="1"/>
</dbReference>
<dbReference type="NCBIfam" id="NF002772">
    <property type="entry name" value="PRK02862.1"/>
    <property type="match status" value="1"/>
</dbReference>
<dbReference type="PANTHER" id="PTHR43523:SF12">
    <property type="entry name" value="GLUCOSE-1-PHOSPHATE ADENYLYLTRANSFERASE LARGE SUBUNIT 1, CHLOROPLASTIC-RELATED"/>
    <property type="match status" value="1"/>
</dbReference>
<dbReference type="PANTHER" id="PTHR43523">
    <property type="entry name" value="GLUCOSE-1-PHOSPHATE ADENYLYLTRANSFERASE-RELATED"/>
    <property type="match status" value="1"/>
</dbReference>
<dbReference type="Pfam" id="PF25247">
    <property type="entry name" value="LbH_GLGC"/>
    <property type="match status" value="1"/>
</dbReference>
<dbReference type="Pfam" id="PF00483">
    <property type="entry name" value="NTP_transferase"/>
    <property type="match status" value="1"/>
</dbReference>
<dbReference type="SUPFAM" id="SSF53448">
    <property type="entry name" value="Nucleotide-diphospho-sugar transferases"/>
    <property type="match status" value="1"/>
</dbReference>
<dbReference type="SUPFAM" id="SSF51161">
    <property type="entry name" value="Trimeric LpxA-like enzymes"/>
    <property type="match status" value="1"/>
</dbReference>
<dbReference type="PROSITE" id="PS00808">
    <property type="entry name" value="ADP_GLC_PYROPHOSPH_1"/>
    <property type="match status" value="1"/>
</dbReference>
<dbReference type="PROSITE" id="PS00809">
    <property type="entry name" value="ADP_GLC_PYROPHOSPH_2"/>
    <property type="match status" value="1"/>
</dbReference>
<dbReference type="PROSITE" id="PS00810">
    <property type="entry name" value="ADP_GLC_PYROPHOSPH_3"/>
    <property type="match status" value="1"/>
</dbReference>
<evidence type="ECO:0000255" key="1">
    <source>
        <dbReference type="HAMAP-Rule" id="MF_00624"/>
    </source>
</evidence>
<keyword id="KW-0067">ATP-binding</keyword>
<keyword id="KW-0119">Carbohydrate metabolism</keyword>
<keyword id="KW-0320">Glycogen biosynthesis</keyword>
<keyword id="KW-0321">Glycogen metabolism</keyword>
<keyword id="KW-0547">Nucleotide-binding</keyword>
<keyword id="KW-0548">Nucleotidyltransferase</keyword>
<keyword id="KW-1185">Reference proteome</keyword>
<keyword id="KW-0808">Transferase</keyword>
<accession>A5GLA9</accession>
<comment type="function">
    <text evidence="1">Involved in the biosynthesis of ADP-glucose, a building block required for the elongation reactions to produce glycogen. Catalyzes the reaction between ATP and alpha-D-glucose 1-phosphate (G1P) to produce pyrophosphate and ADP-Glc.</text>
</comment>
<comment type="catalytic activity">
    <reaction evidence="1">
        <text>alpha-D-glucose 1-phosphate + ATP + H(+) = ADP-alpha-D-glucose + diphosphate</text>
        <dbReference type="Rhea" id="RHEA:12120"/>
        <dbReference type="ChEBI" id="CHEBI:15378"/>
        <dbReference type="ChEBI" id="CHEBI:30616"/>
        <dbReference type="ChEBI" id="CHEBI:33019"/>
        <dbReference type="ChEBI" id="CHEBI:57498"/>
        <dbReference type="ChEBI" id="CHEBI:58601"/>
        <dbReference type="EC" id="2.7.7.27"/>
    </reaction>
</comment>
<comment type="pathway">
    <text evidence="1">Glycan biosynthesis; glycogen biosynthesis.</text>
</comment>
<comment type="subunit">
    <text evidence="1">Homotetramer.</text>
</comment>
<comment type="similarity">
    <text evidence="1">Belongs to the bacterial/plant glucose-1-phosphate adenylyltransferase family.</text>
</comment>
<organism>
    <name type="scientific">Synechococcus sp. (strain WH7803)</name>
    <dbReference type="NCBI Taxonomy" id="32051"/>
    <lineage>
        <taxon>Bacteria</taxon>
        <taxon>Bacillati</taxon>
        <taxon>Cyanobacteriota</taxon>
        <taxon>Cyanophyceae</taxon>
        <taxon>Synechococcales</taxon>
        <taxon>Synechococcaceae</taxon>
        <taxon>Synechococcus</taxon>
    </lineage>
</organism>
<proteinExistence type="inferred from homology"/>
<sequence length="431" mass="48071">MKRVLAIILGGGAGTRLYPLTKMRAKPAVPLAGKYRLIDIPISNCINSNINKMYVLTQFNSASLNRHLSQTYNLSAGFGQGFVEVLAAQQTPESPSWFEGTADAVRKYQWLFQEWDVDEYLILSGDQLYRMDYSLFINHHRSTGADLTVAALPVDAKQAEAFGLMRTDEDGRILEFREKPKGDSLLEMAVDTSRFGLSAESAKERPYLASMGIYVFSRDTLFDLLHQNPTHKDFGKEVIPEALQRGDRLKSYVFDDYWEDIGTIGAFYEANLALTQQPTPPFSFYDAEFPIYTRPRYLPPSKLVDSQITDSIIGEGSILKSCSIHHSVLGVRSRVEDEVVLQDSLLMGSDFFESSSERAVLRERGGIPLGVGKGTTVKRAILDKNARIGSNVTIVNKDHVEEADRPEHGFYIRNGIVVVVKNASIPDGTVI</sequence>